<protein>
    <recommendedName>
        <fullName evidence="1">Ribonuclease HII</fullName>
        <shortName evidence="1">RNase HII</shortName>
        <ecNumber evidence="1">3.1.26.4</ecNumber>
    </recommendedName>
</protein>
<feature type="chain" id="PRO_0000111664" description="Ribonuclease HII">
    <location>
        <begin position="1"/>
        <end position="220"/>
    </location>
</feature>
<feature type="domain" description="RNase H type-2" evidence="2">
    <location>
        <begin position="1"/>
        <end position="219"/>
    </location>
</feature>
<feature type="binding site" evidence="1">
    <location>
        <position position="7"/>
    </location>
    <ligand>
        <name>a divalent metal cation</name>
        <dbReference type="ChEBI" id="CHEBI:60240"/>
    </ligand>
</feature>
<feature type="binding site" evidence="1">
    <location>
        <position position="8"/>
    </location>
    <ligand>
        <name>a divalent metal cation</name>
        <dbReference type="ChEBI" id="CHEBI:60240"/>
    </ligand>
</feature>
<feature type="binding site" evidence="1">
    <location>
        <position position="105"/>
    </location>
    <ligand>
        <name>a divalent metal cation</name>
        <dbReference type="ChEBI" id="CHEBI:60240"/>
    </ligand>
</feature>
<dbReference type="EC" id="3.1.26.4" evidence="1"/>
<dbReference type="EMBL" id="AE008384">
    <property type="protein sequence ID" value="AAM32510.1"/>
    <property type="molecule type" value="Genomic_DNA"/>
</dbReference>
<dbReference type="RefSeq" id="WP_011034722.1">
    <property type="nucleotide sequence ID" value="NC_003901.1"/>
</dbReference>
<dbReference type="SMR" id="Q8PTA3"/>
<dbReference type="GeneID" id="82161902"/>
<dbReference type="KEGG" id="mma:MM_2814"/>
<dbReference type="PATRIC" id="fig|192952.21.peg.3249"/>
<dbReference type="eggNOG" id="arCOG04121">
    <property type="taxonomic scope" value="Archaea"/>
</dbReference>
<dbReference type="HOGENOM" id="CLU_036532_0_4_2"/>
<dbReference type="Proteomes" id="UP000000595">
    <property type="component" value="Chromosome"/>
</dbReference>
<dbReference type="GO" id="GO:0005737">
    <property type="term" value="C:cytoplasm"/>
    <property type="evidence" value="ECO:0007669"/>
    <property type="project" value="UniProtKB-SubCell"/>
</dbReference>
<dbReference type="GO" id="GO:0032299">
    <property type="term" value="C:ribonuclease H2 complex"/>
    <property type="evidence" value="ECO:0007669"/>
    <property type="project" value="TreeGrafter"/>
</dbReference>
<dbReference type="GO" id="GO:0030145">
    <property type="term" value="F:manganese ion binding"/>
    <property type="evidence" value="ECO:0007669"/>
    <property type="project" value="UniProtKB-UniRule"/>
</dbReference>
<dbReference type="GO" id="GO:0003723">
    <property type="term" value="F:RNA binding"/>
    <property type="evidence" value="ECO:0007669"/>
    <property type="project" value="InterPro"/>
</dbReference>
<dbReference type="GO" id="GO:0004523">
    <property type="term" value="F:RNA-DNA hybrid ribonuclease activity"/>
    <property type="evidence" value="ECO:0007669"/>
    <property type="project" value="UniProtKB-UniRule"/>
</dbReference>
<dbReference type="GO" id="GO:0043137">
    <property type="term" value="P:DNA replication, removal of RNA primer"/>
    <property type="evidence" value="ECO:0007669"/>
    <property type="project" value="TreeGrafter"/>
</dbReference>
<dbReference type="GO" id="GO:0006298">
    <property type="term" value="P:mismatch repair"/>
    <property type="evidence" value="ECO:0007669"/>
    <property type="project" value="TreeGrafter"/>
</dbReference>
<dbReference type="CDD" id="cd07180">
    <property type="entry name" value="RNase_HII_archaea_like"/>
    <property type="match status" value="1"/>
</dbReference>
<dbReference type="FunFam" id="1.10.10.460:FF:000001">
    <property type="entry name" value="Ribonuclease"/>
    <property type="match status" value="1"/>
</dbReference>
<dbReference type="FunFam" id="3.30.420.10:FF:000139">
    <property type="entry name" value="Ribonuclease HII"/>
    <property type="match status" value="1"/>
</dbReference>
<dbReference type="Gene3D" id="3.30.420.10">
    <property type="entry name" value="Ribonuclease H-like superfamily/Ribonuclease H"/>
    <property type="match status" value="1"/>
</dbReference>
<dbReference type="Gene3D" id="1.10.10.460">
    <property type="entry name" value="Ribonuclease hii. Domain 2"/>
    <property type="match status" value="1"/>
</dbReference>
<dbReference type="HAMAP" id="MF_00052_A">
    <property type="entry name" value="RNase_HII_A"/>
    <property type="match status" value="1"/>
</dbReference>
<dbReference type="InterPro" id="IPR004649">
    <property type="entry name" value="RNase_H2_suA"/>
</dbReference>
<dbReference type="InterPro" id="IPR001352">
    <property type="entry name" value="RNase_HII/HIII"/>
</dbReference>
<dbReference type="InterPro" id="IPR024567">
    <property type="entry name" value="RNase_HII/HIII_dom"/>
</dbReference>
<dbReference type="InterPro" id="IPR020787">
    <property type="entry name" value="RNase_HII_arc"/>
</dbReference>
<dbReference type="InterPro" id="IPR023160">
    <property type="entry name" value="RNase_HII_hlx-loop-hlx_cap_dom"/>
</dbReference>
<dbReference type="InterPro" id="IPR012337">
    <property type="entry name" value="RNaseH-like_sf"/>
</dbReference>
<dbReference type="InterPro" id="IPR036397">
    <property type="entry name" value="RNaseH_sf"/>
</dbReference>
<dbReference type="NCBIfam" id="TIGR00729">
    <property type="entry name" value="ribonuclease HII"/>
    <property type="match status" value="1"/>
</dbReference>
<dbReference type="PANTHER" id="PTHR10954:SF23">
    <property type="entry name" value="RIBONUCLEASE"/>
    <property type="match status" value="1"/>
</dbReference>
<dbReference type="PANTHER" id="PTHR10954">
    <property type="entry name" value="RIBONUCLEASE H2 SUBUNIT A"/>
    <property type="match status" value="1"/>
</dbReference>
<dbReference type="Pfam" id="PF01351">
    <property type="entry name" value="RNase_HII"/>
    <property type="match status" value="1"/>
</dbReference>
<dbReference type="SUPFAM" id="SSF53098">
    <property type="entry name" value="Ribonuclease H-like"/>
    <property type="match status" value="1"/>
</dbReference>
<dbReference type="PROSITE" id="PS51975">
    <property type="entry name" value="RNASE_H_2"/>
    <property type="match status" value="1"/>
</dbReference>
<name>RNH2_METMA</name>
<sequence>MMIAGIDEAGKGPVIGPMCIGGVKIDESKAHILKVLGVADSKKLTPKKREQLASQIKKHADGYFIFEVSPSQIDELRKIMSMNEIMVVCFAKVLEQLKPDIVYADAADVKAERFAENLLRQYAKTSPDHAKKIKVVSMHQADAIYPVVSAASIIAKVRRDELIEELKREWCIDFGSGYPSDPKTRGFLLKWGKEHGGDFPDIVRQSWQTVENIREELKKS</sequence>
<organism>
    <name type="scientific">Methanosarcina mazei (strain ATCC BAA-159 / DSM 3647 / Goe1 / Go1 / JCM 11833 / OCM 88)</name>
    <name type="common">Methanosarcina frisia</name>
    <dbReference type="NCBI Taxonomy" id="192952"/>
    <lineage>
        <taxon>Archaea</taxon>
        <taxon>Methanobacteriati</taxon>
        <taxon>Methanobacteriota</taxon>
        <taxon>Stenosarchaea group</taxon>
        <taxon>Methanomicrobia</taxon>
        <taxon>Methanosarcinales</taxon>
        <taxon>Methanosarcinaceae</taxon>
        <taxon>Methanosarcina</taxon>
    </lineage>
</organism>
<gene>
    <name evidence="1" type="primary">rnhB</name>
    <name type="ordered locus">MM_2814</name>
</gene>
<reference key="1">
    <citation type="journal article" date="2002" name="J. Mol. Microbiol. Biotechnol.">
        <title>The genome of Methanosarcina mazei: evidence for lateral gene transfer between Bacteria and Archaea.</title>
        <authorList>
            <person name="Deppenmeier U."/>
            <person name="Johann A."/>
            <person name="Hartsch T."/>
            <person name="Merkl R."/>
            <person name="Schmitz R.A."/>
            <person name="Martinez-Arias R."/>
            <person name="Henne A."/>
            <person name="Wiezer A."/>
            <person name="Baeumer S."/>
            <person name="Jacobi C."/>
            <person name="Brueggemann H."/>
            <person name="Lienard T."/>
            <person name="Christmann A."/>
            <person name="Boemecke M."/>
            <person name="Steckel S."/>
            <person name="Bhattacharyya A."/>
            <person name="Lykidis A."/>
            <person name="Overbeek R."/>
            <person name="Klenk H.-P."/>
            <person name="Gunsalus R.P."/>
            <person name="Fritz H.-J."/>
            <person name="Gottschalk G."/>
        </authorList>
    </citation>
    <scope>NUCLEOTIDE SEQUENCE [LARGE SCALE GENOMIC DNA]</scope>
    <source>
        <strain>ATCC BAA-159 / DSM 3647 / Goe1 / Go1 / JCM 11833 / OCM 88</strain>
    </source>
</reference>
<proteinExistence type="inferred from homology"/>
<accession>Q8PTA3</accession>
<comment type="function">
    <text evidence="1">Endonuclease that specifically degrades the RNA of RNA-DNA hybrids.</text>
</comment>
<comment type="catalytic activity">
    <reaction evidence="1">
        <text>Endonucleolytic cleavage to 5'-phosphomonoester.</text>
        <dbReference type="EC" id="3.1.26.4"/>
    </reaction>
</comment>
<comment type="cofactor">
    <cofactor evidence="1">
        <name>Mn(2+)</name>
        <dbReference type="ChEBI" id="CHEBI:29035"/>
    </cofactor>
    <cofactor evidence="1">
        <name>Mg(2+)</name>
        <dbReference type="ChEBI" id="CHEBI:18420"/>
    </cofactor>
    <text evidence="1">Manganese or magnesium. Binds 1 divalent metal ion per monomer in the absence of substrate. May bind a second metal ion after substrate binding.</text>
</comment>
<comment type="subcellular location">
    <subcellularLocation>
        <location evidence="1">Cytoplasm</location>
    </subcellularLocation>
</comment>
<comment type="similarity">
    <text evidence="1">Belongs to the RNase HII family.</text>
</comment>
<keyword id="KW-0963">Cytoplasm</keyword>
<keyword id="KW-0255">Endonuclease</keyword>
<keyword id="KW-0378">Hydrolase</keyword>
<keyword id="KW-0464">Manganese</keyword>
<keyword id="KW-0479">Metal-binding</keyword>
<keyword id="KW-0540">Nuclease</keyword>
<evidence type="ECO:0000255" key="1">
    <source>
        <dbReference type="HAMAP-Rule" id="MF_00052"/>
    </source>
</evidence>
<evidence type="ECO:0000255" key="2">
    <source>
        <dbReference type="PROSITE-ProRule" id="PRU01319"/>
    </source>
</evidence>